<dbReference type="EMBL" id="CP001391">
    <property type="protein sequence ID" value="ACN95293.1"/>
    <property type="molecule type" value="Genomic_DNA"/>
</dbReference>
<dbReference type="RefSeq" id="WP_006279350.1">
    <property type="nucleotide sequence ID" value="NZ_MKIF01000201.1"/>
</dbReference>
<dbReference type="SMR" id="C0R301"/>
<dbReference type="STRING" id="66084.WRi_005110"/>
<dbReference type="KEGG" id="wri:WRi_005110"/>
<dbReference type="HOGENOM" id="CLU_158491_4_0_5"/>
<dbReference type="Proteomes" id="UP000001293">
    <property type="component" value="Chromosome"/>
</dbReference>
<dbReference type="GO" id="GO:1990904">
    <property type="term" value="C:ribonucleoprotein complex"/>
    <property type="evidence" value="ECO:0007669"/>
    <property type="project" value="UniProtKB-KW"/>
</dbReference>
<dbReference type="GO" id="GO:0005840">
    <property type="term" value="C:ribosome"/>
    <property type="evidence" value="ECO:0007669"/>
    <property type="project" value="UniProtKB-KW"/>
</dbReference>
<dbReference type="GO" id="GO:0003735">
    <property type="term" value="F:structural constituent of ribosome"/>
    <property type="evidence" value="ECO:0007669"/>
    <property type="project" value="InterPro"/>
</dbReference>
<dbReference type="GO" id="GO:0006412">
    <property type="term" value="P:translation"/>
    <property type="evidence" value="ECO:0007669"/>
    <property type="project" value="UniProtKB-UniRule"/>
</dbReference>
<dbReference type="CDD" id="cd00427">
    <property type="entry name" value="Ribosomal_L29_HIP"/>
    <property type="match status" value="1"/>
</dbReference>
<dbReference type="Gene3D" id="1.10.287.310">
    <property type="match status" value="1"/>
</dbReference>
<dbReference type="HAMAP" id="MF_00374">
    <property type="entry name" value="Ribosomal_uL29"/>
    <property type="match status" value="1"/>
</dbReference>
<dbReference type="InterPro" id="IPR001854">
    <property type="entry name" value="Ribosomal_uL29"/>
</dbReference>
<dbReference type="InterPro" id="IPR036049">
    <property type="entry name" value="Ribosomal_uL29_sf"/>
</dbReference>
<dbReference type="NCBIfam" id="TIGR00012">
    <property type="entry name" value="L29"/>
    <property type="match status" value="1"/>
</dbReference>
<dbReference type="Pfam" id="PF00831">
    <property type="entry name" value="Ribosomal_L29"/>
    <property type="match status" value="1"/>
</dbReference>
<dbReference type="SUPFAM" id="SSF46561">
    <property type="entry name" value="Ribosomal protein L29 (L29p)"/>
    <property type="match status" value="1"/>
</dbReference>
<gene>
    <name evidence="1" type="primary">rpmC</name>
    <name type="ordered locus">WRi_005110</name>
</gene>
<reference key="1">
    <citation type="journal article" date="2009" name="Proc. Natl. Acad. Sci. U.S.A.">
        <title>The mosaic genome structure of the Wolbachia wRi strain infecting Drosophila simulans.</title>
        <authorList>
            <person name="Klasson L."/>
            <person name="Westberg J."/>
            <person name="Sapountzis P."/>
            <person name="Naeslund K."/>
            <person name="Lutnaes Y."/>
            <person name="Darby A.C."/>
            <person name="Veneti Z."/>
            <person name="Chen L."/>
            <person name="Braig H.R."/>
            <person name="Garrett R."/>
            <person name="Bourtzis K."/>
            <person name="Andersson S.G."/>
        </authorList>
    </citation>
    <scope>NUCLEOTIDE SEQUENCE [LARGE SCALE GENOMIC DNA]</scope>
    <source>
        <strain>wRi</strain>
    </source>
</reference>
<organism>
    <name type="scientific">Wolbachia sp. subsp. Drosophila simulans (strain wRi)</name>
    <dbReference type="NCBI Taxonomy" id="66084"/>
    <lineage>
        <taxon>Bacteria</taxon>
        <taxon>Pseudomonadati</taxon>
        <taxon>Pseudomonadota</taxon>
        <taxon>Alphaproteobacteria</taxon>
        <taxon>Rickettsiales</taxon>
        <taxon>Anaplasmataceae</taxon>
        <taxon>Wolbachieae</taxon>
        <taxon>Wolbachia</taxon>
    </lineage>
</organism>
<protein>
    <recommendedName>
        <fullName evidence="1">Large ribosomal subunit protein uL29</fullName>
    </recommendedName>
    <alternativeName>
        <fullName evidence="2">50S ribosomal protein L29</fullName>
    </alternativeName>
</protein>
<comment type="similarity">
    <text evidence="1">Belongs to the universal ribosomal protein uL29 family.</text>
</comment>
<accession>C0R301</accession>
<keyword id="KW-0687">Ribonucleoprotein</keyword>
<keyword id="KW-0689">Ribosomal protein</keyword>
<feature type="chain" id="PRO_1000194043" description="Large ribosomal subunit protein uL29">
    <location>
        <begin position="1"/>
        <end position="67"/>
    </location>
</feature>
<name>RL29_WOLWR</name>
<sequence length="67" mass="7913">MDIADIESRSSQELHEILVNLRKEFVNLVFQKKLGQCNNISRFSLIRKSIARILTTLNKRRREEKNA</sequence>
<proteinExistence type="inferred from homology"/>
<evidence type="ECO:0000255" key="1">
    <source>
        <dbReference type="HAMAP-Rule" id="MF_00374"/>
    </source>
</evidence>
<evidence type="ECO:0000305" key="2"/>